<proteinExistence type="evidence at protein level"/>
<name>C7351_ARATH</name>
<protein>
    <recommendedName>
        <fullName>Cytokinin hydroxylase</fullName>
        <ecNumber>1.14.13.-</ecNumber>
    </recommendedName>
    <alternativeName>
        <fullName>Cytochrome P450 35A1</fullName>
    </alternativeName>
</protein>
<organism>
    <name type="scientific">Arabidopsis thaliana</name>
    <name type="common">Mouse-ear cress</name>
    <dbReference type="NCBI Taxonomy" id="3702"/>
    <lineage>
        <taxon>Eukaryota</taxon>
        <taxon>Viridiplantae</taxon>
        <taxon>Streptophyta</taxon>
        <taxon>Embryophyta</taxon>
        <taxon>Tracheophyta</taxon>
        <taxon>Spermatophyta</taxon>
        <taxon>Magnoliopsida</taxon>
        <taxon>eudicotyledons</taxon>
        <taxon>Gunneridae</taxon>
        <taxon>Pentapetalae</taxon>
        <taxon>rosids</taxon>
        <taxon>malvids</taxon>
        <taxon>Brassicales</taxon>
        <taxon>Brassicaceae</taxon>
        <taxon>Camelineae</taxon>
        <taxon>Arabidopsis</taxon>
    </lineage>
</organism>
<comment type="function">
    <text evidence="3">Cytokinin hydroxylase that catalyzes the biosynthesis of trans-zeatin via the isopentenyladenine riboside 5'-monophosphate (iPRMP)-dependent pathway. Can use isopentenyladenosine-5'-monophosphate, isopentenyladenosine-5'-diphosphate and isopentenyladenosine-5'-triphosphate as substrate.</text>
</comment>
<comment type="catalytic activity">
    <reaction>
        <text>N(6)-(dimethylallyl)adenosine 5'-phosphate + NADPH + O2 + H(+) = 9-ribosyl-trans-zeatin 5'-phosphate + NADP(+) + H2O</text>
        <dbReference type="Rhea" id="RHEA:47812"/>
        <dbReference type="ChEBI" id="CHEBI:15377"/>
        <dbReference type="ChEBI" id="CHEBI:15378"/>
        <dbReference type="ChEBI" id="CHEBI:15379"/>
        <dbReference type="ChEBI" id="CHEBI:57526"/>
        <dbReference type="ChEBI" id="CHEBI:57783"/>
        <dbReference type="ChEBI" id="CHEBI:58349"/>
        <dbReference type="ChEBI" id="CHEBI:87947"/>
    </reaction>
</comment>
<comment type="catalytic activity">
    <reaction>
        <text>N(6)-(dimethylallyl)adenosine 5'-diphosphate + NADPH + O2 + H(+) = 9-ribosyl-trans-zeatin 5'-diphosphate + NADP(+) + H2O</text>
        <dbReference type="Rhea" id="RHEA:47816"/>
        <dbReference type="ChEBI" id="CHEBI:15377"/>
        <dbReference type="ChEBI" id="CHEBI:15378"/>
        <dbReference type="ChEBI" id="CHEBI:15379"/>
        <dbReference type="ChEBI" id="CHEBI:57783"/>
        <dbReference type="ChEBI" id="CHEBI:58349"/>
        <dbReference type="ChEBI" id="CHEBI:73533"/>
        <dbReference type="ChEBI" id="CHEBI:87950"/>
    </reaction>
</comment>
<comment type="catalytic activity">
    <reaction>
        <text>N(6)-(dimethylallyl)adenosine 5'-triphosphate + NADPH + O2 + H(+) = 9-ribosyl-trans-zeatin 5'-triphosphate + NADP(+) + H2O</text>
        <dbReference type="Rhea" id="RHEA:47820"/>
        <dbReference type="ChEBI" id="CHEBI:15377"/>
        <dbReference type="ChEBI" id="CHEBI:15378"/>
        <dbReference type="ChEBI" id="CHEBI:15379"/>
        <dbReference type="ChEBI" id="CHEBI:57783"/>
        <dbReference type="ChEBI" id="CHEBI:58349"/>
        <dbReference type="ChEBI" id="CHEBI:73532"/>
        <dbReference type="ChEBI" id="CHEBI:87953"/>
    </reaction>
</comment>
<comment type="cofactor">
    <cofactor evidence="1">
        <name>heme</name>
        <dbReference type="ChEBI" id="CHEBI:30413"/>
    </cofactor>
</comment>
<comment type="biophysicochemical properties">
    <kinetics>
        <KM evidence="3">1.76 uM for isopentenyladenine riboside 5'-monophosphate</KM>
        <KM evidence="3">2.28 uM for isopentenyladenine riboside 5'-diphosphate</KM>
        <KM evidence="3">8.32 uM for isopentenyladenine riboside 5'-triphosphate</KM>
    </kinetics>
</comment>
<comment type="subcellular location">
    <subcellularLocation>
        <location evidence="4">Membrane</location>
        <topology evidence="4">Single-pass membrane protein</topology>
    </subcellularLocation>
</comment>
<comment type="tissue specificity">
    <text evidence="3">Expressed in roots and flowers.</text>
</comment>
<comment type="induction">
    <text evidence="3">By trans-zeatin and isopentenyladenine in roots. Down-regulated by auxin and abscisic acid in roots.</text>
</comment>
<comment type="similarity">
    <text evidence="4">Belongs to the cytochrome P450 family.</text>
</comment>
<comment type="sequence caution" evidence="4">
    <conflict type="miscellaneous discrepancy">
        <sequence resource="EMBL" id="BX832759"/>
    </conflict>
    <text>Sequencing errors.</text>
</comment>
<sequence>MLLTILKSLLVIFVTTILRVLYDTISCYWLTPRRIKKIMEQQGVTGPKPRPLTGNILEISAMVSQSASKDCDSIHHDIVGRLLPHYVAWSKQYGKRFIVWNGTDPRLCLTETELIKELLMKHNGVSGRSWLQQQGTKNFIGRGLLMANGQDWHHQRHLAAPAFTGERLKGYARHMVECTSKLVERLRKEVGEGANEVEIGEEMHKLTADIISRTKFGSSFEKGKELFNHLTVLQRRCAQATRHLCFPGSRFLPSKYNREIKSLKKEVERLLIEIIQSRRDCAEMGRSSTHGDDLLGLLLNEMDIDKNNNNNNNNLQLIMDECKTFFFAGHETTALLLTWTTMLLADNPTWQEKVREEVREVFGRNGLPSVDQLSKLTSLSKVINESLRLYPPATLLPRMAFEDLKLGDLTIPKGLSIWIPVLAIHHSEELWGKDANQFNPERFGGRPFASGRHFIPFAAGPRNCIGQQFALMEAKIILATLISKFNFTISKNYRHAPIVVLTIKPKYGVQVILKPLVS</sequence>
<reference key="1">
    <citation type="journal article" date="1997" name="DNA Res.">
        <title>Structural analysis of Arabidopsis thaliana chromosome 5. I. Sequence features of the 1.6 Mb regions covered by twenty physically assigned P1 clones.</title>
        <authorList>
            <person name="Sato S."/>
            <person name="Kotani H."/>
            <person name="Nakamura Y."/>
            <person name="Kaneko T."/>
            <person name="Asamizu E."/>
            <person name="Fukami M."/>
            <person name="Miyajima N."/>
            <person name="Tabata S."/>
        </authorList>
    </citation>
    <scope>NUCLEOTIDE SEQUENCE [LARGE SCALE GENOMIC DNA]</scope>
    <source>
        <strain>cv. Columbia</strain>
    </source>
</reference>
<reference key="2">
    <citation type="journal article" date="2017" name="Plant J.">
        <title>Araport11: a complete reannotation of the Arabidopsis thaliana reference genome.</title>
        <authorList>
            <person name="Cheng C.Y."/>
            <person name="Krishnakumar V."/>
            <person name="Chan A.P."/>
            <person name="Thibaud-Nissen F."/>
            <person name="Schobel S."/>
            <person name="Town C.D."/>
        </authorList>
    </citation>
    <scope>GENOME REANNOTATION</scope>
    <source>
        <strain>cv. Columbia</strain>
    </source>
</reference>
<reference key="3">
    <citation type="journal article" date="2004" name="Genome Res.">
        <title>Whole genome sequence comparisons and 'full-length' cDNA sequences: a combined approach to evaluate and improve Arabidopsis genome annotation.</title>
        <authorList>
            <person name="Castelli V."/>
            <person name="Aury J.-M."/>
            <person name="Jaillon O."/>
            <person name="Wincker P."/>
            <person name="Clepet C."/>
            <person name="Menard M."/>
            <person name="Cruaud C."/>
            <person name="Quetier F."/>
            <person name="Scarpelli C."/>
            <person name="Schaechter V."/>
            <person name="Temple G."/>
            <person name="Caboche M."/>
            <person name="Weissenbach J."/>
            <person name="Salanoubat M."/>
        </authorList>
    </citation>
    <scope>NUCLEOTIDE SEQUENCE [LARGE SCALE MRNA]</scope>
    <source>
        <strain>cv. Columbia</strain>
    </source>
</reference>
<reference key="4">
    <citation type="journal article" date="2004" name="J. Biol. Chem.">
        <title>Arabidopsis CYP735A1 and CYP735A2 encode cytokinin hydroxylases that catalyze the biosynthesis of trans-Zeatin.</title>
        <authorList>
            <person name="Takei K."/>
            <person name="Yamaya T."/>
            <person name="Sakakibara H."/>
        </authorList>
    </citation>
    <scope>FUNCTION</scope>
    <scope>BIOPHYSICOCHEMICAL PROPERTIES</scope>
    <scope>TISSUE SPECIFICITY</scope>
    <scope>INDUCTION</scope>
</reference>
<accession>Q9FF18</accession>
<gene>
    <name type="primary">CYP735A1</name>
    <name type="ordered locus">At5g38450</name>
    <name type="ORF">MXI10.18</name>
</gene>
<evidence type="ECO:0000250" key="1"/>
<evidence type="ECO:0000255" key="2"/>
<evidence type="ECO:0000269" key="3">
    <source>
    </source>
</evidence>
<evidence type="ECO:0000305" key="4"/>
<feature type="chain" id="PRO_0000411208" description="Cytokinin hydroxylase">
    <location>
        <begin position="1"/>
        <end position="518"/>
    </location>
</feature>
<feature type="transmembrane region" description="Helical" evidence="2">
    <location>
        <begin position="1"/>
        <end position="21"/>
    </location>
</feature>
<feature type="binding site" description="axial binding residue" evidence="1">
    <location>
        <position position="464"/>
    </location>
    <ligand>
        <name>heme</name>
        <dbReference type="ChEBI" id="CHEBI:30413"/>
    </ligand>
    <ligandPart>
        <name>Fe</name>
        <dbReference type="ChEBI" id="CHEBI:18248"/>
    </ligandPart>
</feature>
<dbReference type="EC" id="1.14.13.-"/>
<dbReference type="EMBL" id="AB005248">
    <property type="protein sequence ID" value="BAB09357.1"/>
    <property type="molecule type" value="Genomic_DNA"/>
</dbReference>
<dbReference type="EMBL" id="CP002688">
    <property type="protein sequence ID" value="AED94318.1"/>
    <property type="molecule type" value="Genomic_DNA"/>
</dbReference>
<dbReference type="EMBL" id="BX832759">
    <property type="status" value="NOT_ANNOTATED_CDS"/>
    <property type="molecule type" value="mRNA"/>
</dbReference>
<dbReference type="RefSeq" id="NP_198661.1">
    <property type="nucleotide sequence ID" value="NM_123206.3"/>
</dbReference>
<dbReference type="SMR" id="Q9FF18"/>
<dbReference type="FunCoup" id="Q9FF18">
    <property type="interactions" value="314"/>
</dbReference>
<dbReference type="STRING" id="3702.Q9FF18"/>
<dbReference type="PaxDb" id="3702-AT5G38450.1"/>
<dbReference type="EnsemblPlants" id="AT5G38450.1">
    <property type="protein sequence ID" value="AT5G38450.1"/>
    <property type="gene ID" value="AT5G38450"/>
</dbReference>
<dbReference type="GeneID" id="833833"/>
<dbReference type="Gramene" id="AT5G38450.1">
    <property type="protein sequence ID" value="AT5G38450.1"/>
    <property type="gene ID" value="AT5G38450"/>
</dbReference>
<dbReference type="KEGG" id="ath:AT5G38450"/>
<dbReference type="Araport" id="AT5G38450"/>
<dbReference type="TAIR" id="AT5G38450">
    <property type="gene designation" value="CYP735A1"/>
</dbReference>
<dbReference type="eggNOG" id="KOG0157">
    <property type="taxonomic scope" value="Eukaryota"/>
</dbReference>
<dbReference type="HOGENOM" id="CLU_001570_5_0_1"/>
<dbReference type="InParanoid" id="Q9FF18"/>
<dbReference type="OMA" id="IQPAFRL"/>
<dbReference type="PhylomeDB" id="Q9FF18"/>
<dbReference type="SABIO-RK" id="Q9FF18"/>
<dbReference type="PRO" id="PR:Q9FF18"/>
<dbReference type="Proteomes" id="UP000006548">
    <property type="component" value="Chromosome 5"/>
</dbReference>
<dbReference type="ExpressionAtlas" id="Q9FF18">
    <property type="expression patterns" value="baseline and differential"/>
</dbReference>
<dbReference type="GO" id="GO:0016020">
    <property type="term" value="C:membrane"/>
    <property type="evidence" value="ECO:0007669"/>
    <property type="project" value="UniProtKB-SubCell"/>
</dbReference>
<dbReference type="GO" id="GO:0099503">
    <property type="term" value="C:secretory vesicle"/>
    <property type="evidence" value="ECO:0007005"/>
    <property type="project" value="TAIR"/>
</dbReference>
<dbReference type="GO" id="GO:0020037">
    <property type="term" value="F:heme binding"/>
    <property type="evidence" value="ECO:0007669"/>
    <property type="project" value="InterPro"/>
</dbReference>
<dbReference type="GO" id="GO:0005506">
    <property type="term" value="F:iron ion binding"/>
    <property type="evidence" value="ECO:0007669"/>
    <property type="project" value="InterPro"/>
</dbReference>
<dbReference type="GO" id="GO:0004497">
    <property type="term" value="F:monooxygenase activity"/>
    <property type="evidence" value="ECO:0007669"/>
    <property type="project" value="UniProtKB-KW"/>
</dbReference>
<dbReference type="GO" id="GO:0016705">
    <property type="term" value="F:oxidoreductase activity, acting on paired donors, with incorporation or reduction of molecular oxygen"/>
    <property type="evidence" value="ECO:0007669"/>
    <property type="project" value="InterPro"/>
</dbReference>
<dbReference type="GO" id="GO:0033466">
    <property type="term" value="P:trans-zeatin biosynthetic process"/>
    <property type="evidence" value="ECO:0000314"/>
    <property type="project" value="UniProtKB"/>
</dbReference>
<dbReference type="CDD" id="cd11052">
    <property type="entry name" value="CYP72_clan"/>
    <property type="match status" value="1"/>
</dbReference>
<dbReference type="FunFam" id="1.10.630.10:FF:000029">
    <property type="entry name" value="Cytochrome P450 734A1"/>
    <property type="match status" value="1"/>
</dbReference>
<dbReference type="Gene3D" id="1.10.630.10">
    <property type="entry name" value="Cytochrome P450"/>
    <property type="match status" value="1"/>
</dbReference>
<dbReference type="InterPro" id="IPR001128">
    <property type="entry name" value="Cyt_P450"/>
</dbReference>
<dbReference type="InterPro" id="IPR002401">
    <property type="entry name" value="Cyt_P450_E_grp-I"/>
</dbReference>
<dbReference type="InterPro" id="IPR036396">
    <property type="entry name" value="Cyt_P450_sf"/>
</dbReference>
<dbReference type="InterPro" id="IPR050665">
    <property type="entry name" value="Cytochrome_P450_Monooxygen"/>
</dbReference>
<dbReference type="PANTHER" id="PTHR24282">
    <property type="entry name" value="CYTOCHROME P450 FAMILY MEMBER"/>
    <property type="match status" value="1"/>
</dbReference>
<dbReference type="PANTHER" id="PTHR24282:SF228">
    <property type="entry name" value="CYTOKININ HYDROXYLASE"/>
    <property type="match status" value="1"/>
</dbReference>
<dbReference type="Pfam" id="PF00067">
    <property type="entry name" value="p450"/>
    <property type="match status" value="1"/>
</dbReference>
<dbReference type="PRINTS" id="PR00463">
    <property type="entry name" value="EP450I"/>
</dbReference>
<dbReference type="PRINTS" id="PR00385">
    <property type="entry name" value="P450"/>
</dbReference>
<dbReference type="SUPFAM" id="SSF48264">
    <property type="entry name" value="Cytochrome P450"/>
    <property type="match status" value="1"/>
</dbReference>
<keyword id="KW-0349">Heme</keyword>
<keyword id="KW-0408">Iron</keyword>
<keyword id="KW-0472">Membrane</keyword>
<keyword id="KW-0479">Metal-binding</keyword>
<keyword id="KW-0503">Monooxygenase</keyword>
<keyword id="KW-0521">NADP</keyword>
<keyword id="KW-0560">Oxidoreductase</keyword>
<keyword id="KW-1185">Reference proteome</keyword>
<keyword id="KW-0812">Transmembrane</keyword>
<keyword id="KW-1133">Transmembrane helix</keyword>